<name>RBSD_ECO27</name>
<organism>
    <name type="scientific">Escherichia coli O127:H6 (strain E2348/69 / EPEC)</name>
    <dbReference type="NCBI Taxonomy" id="574521"/>
    <lineage>
        <taxon>Bacteria</taxon>
        <taxon>Pseudomonadati</taxon>
        <taxon>Pseudomonadota</taxon>
        <taxon>Gammaproteobacteria</taxon>
        <taxon>Enterobacterales</taxon>
        <taxon>Enterobacteriaceae</taxon>
        <taxon>Escherichia</taxon>
    </lineage>
</organism>
<feature type="chain" id="PRO_1000187140" description="D-ribose pyranase">
    <location>
        <begin position="1"/>
        <end position="139"/>
    </location>
</feature>
<feature type="active site" description="Proton donor" evidence="1">
    <location>
        <position position="20"/>
    </location>
</feature>
<feature type="binding site" evidence="1">
    <location>
        <position position="28"/>
    </location>
    <ligand>
        <name>substrate</name>
    </ligand>
</feature>
<feature type="binding site" evidence="1">
    <location>
        <position position="106"/>
    </location>
    <ligand>
        <name>substrate</name>
    </ligand>
</feature>
<feature type="binding site" evidence="1">
    <location>
        <begin position="128"/>
        <end position="130"/>
    </location>
    <ligand>
        <name>substrate</name>
    </ligand>
</feature>
<comment type="function">
    <text evidence="1">Catalyzes the interconversion of beta-pyran and beta-furan forms of D-ribose.</text>
</comment>
<comment type="catalytic activity">
    <reaction evidence="1">
        <text>beta-D-ribopyranose = beta-D-ribofuranose</text>
        <dbReference type="Rhea" id="RHEA:25432"/>
        <dbReference type="ChEBI" id="CHEBI:27476"/>
        <dbReference type="ChEBI" id="CHEBI:47002"/>
        <dbReference type="EC" id="5.4.99.62"/>
    </reaction>
</comment>
<comment type="pathway">
    <text evidence="1">Carbohydrate metabolism; D-ribose degradation; D-ribose 5-phosphate from beta-D-ribopyranose: step 1/2.</text>
</comment>
<comment type="subunit">
    <text evidence="1">Homodecamer.</text>
</comment>
<comment type="subcellular location">
    <subcellularLocation>
        <location evidence="1">Cytoplasm</location>
    </subcellularLocation>
</comment>
<comment type="similarity">
    <text evidence="1">Belongs to the RbsD / FucU family. RbsD subfamily.</text>
</comment>
<gene>
    <name evidence="1" type="primary">rbsD</name>
    <name type="ordered locus">E2348C_4058</name>
</gene>
<evidence type="ECO:0000255" key="1">
    <source>
        <dbReference type="HAMAP-Rule" id="MF_01661"/>
    </source>
</evidence>
<reference key="1">
    <citation type="journal article" date="2009" name="J. Bacteriol.">
        <title>Complete genome sequence and comparative genome analysis of enteropathogenic Escherichia coli O127:H6 strain E2348/69.</title>
        <authorList>
            <person name="Iguchi A."/>
            <person name="Thomson N.R."/>
            <person name="Ogura Y."/>
            <person name="Saunders D."/>
            <person name="Ooka T."/>
            <person name="Henderson I.R."/>
            <person name="Harris D."/>
            <person name="Asadulghani M."/>
            <person name="Kurokawa K."/>
            <person name="Dean P."/>
            <person name="Kenny B."/>
            <person name="Quail M.A."/>
            <person name="Thurston S."/>
            <person name="Dougan G."/>
            <person name="Hayashi T."/>
            <person name="Parkhill J."/>
            <person name="Frankel G."/>
        </authorList>
    </citation>
    <scope>NUCLEOTIDE SEQUENCE [LARGE SCALE GENOMIC DNA]</scope>
    <source>
        <strain>E2348/69 / EPEC</strain>
    </source>
</reference>
<dbReference type="EC" id="5.4.99.62" evidence="1"/>
<dbReference type="EMBL" id="FM180568">
    <property type="protein sequence ID" value="CAS11606.1"/>
    <property type="molecule type" value="Genomic_DNA"/>
</dbReference>
<dbReference type="RefSeq" id="WP_001339852.1">
    <property type="nucleotide sequence ID" value="NC_011601.1"/>
</dbReference>
<dbReference type="SMR" id="B7UML3"/>
<dbReference type="KEGG" id="ecg:E2348C_4058"/>
<dbReference type="HOGENOM" id="CLU_135498_0_0_6"/>
<dbReference type="UniPathway" id="UPA00916">
    <property type="reaction ID" value="UER00888"/>
</dbReference>
<dbReference type="Proteomes" id="UP000008205">
    <property type="component" value="Chromosome"/>
</dbReference>
<dbReference type="GO" id="GO:0005829">
    <property type="term" value="C:cytosol"/>
    <property type="evidence" value="ECO:0007669"/>
    <property type="project" value="TreeGrafter"/>
</dbReference>
<dbReference type="GO" id="GO:0062193">
    <property type="term" value="F:D-ribose pyranase activity"/>
    <property type="evidence" value="ECO:0007669"/>
    <property type="project" value="UniProtKB-EC"/>
</dbReference>
<dbReference type="GO" id="GO:0016872">
    <property type="term" value="F:intramolecular lyase activity"/>
    <property type="evidence" value="ECO:0007669"/>
    <property type="project" value="UniProtKB-UniRule"/>
</dbReference>
<dbReference type="GO" id="GO:0048029">
    <property type="term" value="F:monosaccharide binding"/>
    <property type="evidence" value="ECO:0007669"/>
    <property type="project" value="InterPro"/>
</dbReference>
<dbReference type="GO" id="GO:0019303">
    <property type="term" value="P:D-ribose catabolic process"/>
    <property type="evidence" value="ECO:0007669"/>
    <property type="project" value="UniProtKB-UniRule"/>
</dbReference>
<dbReference type="FunFam" id="3.40.1650.10:FF:000002">
    <property type="entry name" value="D-ribose pyranase"/>
    <property type="match status" value="1"/>
</dbReference>
<dbReference type="Gene3D" id="3.40.1650.10">
    <property type="entry name" value="RbsD-like domain"/>
    <property type="match status" value="1"/>
</dbReference>
<dbReference type="HAMAP" id="MF_01661">
    <property type="entry name" value="D_rib_pyranase"/>
    <property type="match status" value="1"/>
</dbReference>
<dbReference type="InterPro" id="IPR023064">
    <property type="entry name" value="D-ribose_pyranase"/>
</dbReference>
<dbReference type="InterPro" id="IPR023750">
    <property type="entry name" value="RbsD-like_sf"/>
</dbReference>
<dbReference type="InterPro" id="IPR007721">
    <property type="entry name" value="RbsD_FucU"/>
</dbReference>
<dbReference type="NCBIfam" id="NF008761">
    <property type="entry name" value="PRK11797.1"/>
    <property type="match status" value="1"/>
</dbReference>
<dbReference type="PANTHER" id="PTHR37831">
    <property type="entry name" value="D-RIBOSE PYRANASE"/>
    <property type="match status" value="1"/>
</dbReference>
<dbReference type="PANTHER" id="PTHR37831:SF1">
    <property type="entry name" value="D-RIBOSE PYRANASE"/>
    <property type="match status" value="1"/>
</dbReference>
<dbReference type="Pfam" id="PF05025">
    <property type="entry name" value="RbsD_FucU"/>
    <property type="match status" value="1"/>
</dbReference>
<dbReference type="SUPFAM" id="SSF102546">
    <property type="entry name" value="RbsD-like"/>
    <property type="match status" value="1"/>
</dbReference>
<protein>
    <recommendedName>
        <fullName evidence="1">D-ribose pyranase</fullName>
        <ecNumber evidence="1">5.4.99.62</ecNumber>
    </recommendedName>
</protein>
<keyword id="KW-0119">Carbohydrate metabolism</keyword>
<keyword id="KW-0963">Cytoplasm</keyword>
<keyword id="KW-0413">Isomerase</keyword>
<keyword id="KW-1185">Reference proteome</keyword>
<sequence length="139" mass="15321">MKKGTVLNSDISSVISRLGHTDTLVVCDAGLPIPKSTTRIDMALTQGVPSFMQVLGVVTNEMQVEAVIIAEEIKQHNPQLHETLLTHLEHLQKHQGNTIEIRYTTHEQFKQQTAESQAVIRSGECSPYANIILCAGVTF</sequence>
<proteinExistence type="inferred from homology"/>
<accession>B7UML3</accession>